<name>PAXP_PENPX</name>
<evidence type="ECO:0000250" key="1">
    <source>
        <dbReference type="UniProtKB" id="P04798"/>
    </source>
</evidence>
<evidence type="ECO:0000255" key="2"/>
<evidence type="ECO:0000269" key="3">
    <source>
    </source>
</evidence>
<evidence type="ECO:0000269" key="4">
    <source>
    </source>
</evidence>
<evidence type="ECO:0000269" key="5">
    <source>
    </source>
</evidence>
<evidence type="ECO:0000269" key="6">
    <source>
    </source>
</evidence>
<evidence type="ECO:0000303" key="7">
    <source>
    </source>
</evidence>
<evidence type="ECO:0000303" key="8">
    <source>
    </source>
</evidence>
<evidence type="ECO:0000305" key="9"/>
<evidence type="ECO:0000305" key="10">
    <source>
    </source>
</evidence>
<evidence type="ECO:0000305" key="11">
    <source>
    </source>
</evidence>
<evidence type="ECO:0000305" key="12">
    <source>
    </source>
</evidence>
<organism>
    <name type="scientific">Penicillium paxilli</name>
    <dbReference type="NCBI Taxonomy" id="70109"/>
    <lineage>
        <taxon>Eukaryota</taxon>
        <taxon>Fungi</taxon>
        <taxon>Dikarya</taxon>
        <taxon>Ascomycota</taxon>
        <taxon>Pezizomycotina</taxon>
        <taxon>Eurotiomycetes</taxon>
        <taxon>Eurotiomycetidae</taxon>
        <taxon>Eurotiales</taxon>
        <taxon>Aspergillaceae</taxon>
        <taxon>Penicillium</taxon>
    </lineage>
</organism>
<feature type="chain" id="PRO_0000436125" description="Cytochrome P450 monooxygenase paxP">
    <location>
        <begin position="1"/>
        <end position="515"/>
    </location>
</feature>
<feature type="transmembrane region" description="Helical" evidence="2">
    <location>
        <begin position="20"/>
        <end position="36"/>
    </location>
</feature>
<feature type="binding site" description="axial binding residue" evidence="1">
    <location>
        <position position="456"/>
    </location>
    <ligand>
        <name>heme</name>
        <dbReference type="ChEBI" id="CHEBI:30413"/>
    </ligand>
    <ligandPart>
        <name>Fe</name>
        <dbReference type="ChEBI" id="CHEBI:18248"/>
    </ligandPart>
</feature>
<keyword id="KW-0349">Heme</keyword>
<keyword id="KW-0408">Iron</keyword>
<keyword id="KW-0472">Membrane</keyword>
<keyword id="KW-0479">Metal-binding</keyword>
<keyword id="KW-0560">Oxidoreductase</keyword>
<keyword id="KW-0812">Transmembrane</keyword>
<keyword id="KW-1133">Transmembrane helix</keyword>
<dbReference type="EC" id="1.-.-.-" evidence="11"/>
<dbReference type="EMBL" id="HM171111">
    <property type="protein sequence ID" value="AAK11528.1"/>
    <property type="molecule type" value="Genomic_DNA"/>
</dbReference>
<dbReference type="SMR" id="Q9C449"/>
<dbReference type="KEGG" id="ag:AAK11528"/>
<dbReference type="BioCyc" id="MetaCyc:MONOMER-18638"/>
<dbReference type="GO" id="GO:0016020">
    <property type="term" value="C:membrane"/>
    <property type="evidence" value="ECO:0007669"/>
    <property type="project" value="UniProtKB-SubCell"/>
</dbReference>
<dbReference type="GO" id="GO:0020037">
    <property type="term" value="F:heme binding"/>
    <property type="evidence" value="ECO:0007669"/>
    <property type="project" value="InterPro"/>
</dbReference>
<dbReference type="GO" id="GO:0005506">
    <property type="term" value="F:iron ion binding"/>
    <property type="evidence" value="ECO:0007669"/>
    <property type="project" value="InterPro"/>
</dbReference>
<dbReference type="GO" id="GO:0004497">
    <property type="term" value="F:monooxygenase activity"/>
    <property type="evidence" value="ECO:0000314"/>
    <property type="project" value="GO_Central"/>
</dbReference>
<dbReference type="GO" id="GO:0016705">
    <property type="term" value="F:oxidoreductase activity, acting on paired donors, with incorporation or reduction of molecular oxygen"/>
    <property type="evidence" value="ECO:0007669"/>
    <property type="project" value="InterPro"/>
</dbReference>
<dbReference type="GO" id="GO:0140873">
    <property type="term" value="P:paxilline biosynthetic process"/>
    <property type="evidence" value="ECO:0000314"/>
    <property type="project" value="GO_Central"/>
</dbReference>
<dbReference type="CDD" id="cd11041">
    <property type="entry name" value="CYP503A1-like"/>
    <property type="match status" value="1"/>
</dbReference>
<dbReference type="Gene3D" id="1.10.630.10">
    <property type="entry name" value="Cytochrome P450"/>
    <property type="match status" value="1"/>
</dbReference>
<dbReference type="InterPro" id="IPR001128">
    <property type="entry name" value="Cyt_P450"/>
</dbReference>
<dbReference type="InterPro" id="IPR002403">
    <property type="entry name" value="Cyt_P450_E_grp-IV"/>
</dbReference>
<dbReference type="InterPro" id="IPR036396">
    <property type="entry name" value="Cyt_P450_sf"/>
</dbReference>
<dbReference type="PANTHER" id="PTHR46206">
    <property type="entry name" value="CYTOCHROME P450"/>
    <property type="match status" value="1"/>
</dbReference>
<dbReference type="PANTHER" id="PTHR46206:SF7">
    <property type="entry name" value="P450, PUTATIVE (EUROFUNG)-RELATED"/>
    <property type="match status" value="1"/>
</dbReference>
<dbReference type="Pfam" id="PF00067">
    <property type="entry name" value="p450"/>
    <property type="match status" value="1"/>
</dbReference>
<dbReference type="PRINTS" id="PR00465">
    <property type="entry name" value="EP450IV"/>
</dbReference>
<dbReference type="SUPFAM" id="SSF48264">
    <property type="entry name" value="Cytochrome P450"/>
    <property type="match status" value="1"/>
</dbReference>
<proteinExistence type="evidence at protein level"/>
<protein>
    <recommendedName>
        <fullName evidence="8">Cytochrome P450 monooxygenase paxP</fullName>
        <ecNumber evidence="11">1.-.-.-</ecNumber>
    </recommendedName>
    <alternativeName>
        <fullName evidence="7">Paxilline synthesis protein P</fullName>
    </alternativeName>
</protein>
<reference key="1">
    <citation type="journal article" date="2001" name="Mol. Microbiol.">
        <title>Molecular cloning and genetic analysis of an indole-diterpene gene cluster from Penicillium paxilli.</title>
        <authorList>
            <person name="Young C."/>
            <person name="McMillan L."/>
            <person name="Telfer E."/>
            <person name="Scott B."/>
        </authorList>
    </citation>
    <scope>NUCLEOTIDE SEQUENCE [GENOMIC DNA]</scope>
    <scope>FUNCTION</scope>
    <source>
        <strain>PN2013</strain>
    </source>
</reference>
<reference key="2">
    <citation type="journal article" date="2013" name="Toxins">
        <title>Deletion and gene expression analyses define the paxilline biosynthetic gene cluster in Penicillium paxilli.</title>
        <authorList>
            <person name="Scott B."/>
            <person name="Young C.A."/>
            <person name="Saikia S."/>
            <person name="McMillan L.K."/>
            <person name="Monahan B.J."/>
            <person name="Koulman A."/>
            <person name="Astin J."/>
            <person name="Eaton C.J."/>
            <person name="Bryant A."/>
            <person name="Wrenn R.E."/>
            <person name="Finch S.C."/>
            <person name="Tapper B.A."/>
            <person name="Parker E.J."/>
            <person name="Jameson G.B."/>
        </authorList>
    </citation>
    <scope>NUCLEOTIDE SEQUENCE [GENOMIC DNA]</scope>
    <scope>FUNCTION</scope>
    <scope>DISRUPTION PHENOTYPE</scope>
    <source>
        <strain>PN2013</strain>
    </source>
</reference>
<reference key="3">
    <citation type="journal article" date="2003" name="Mol. Genet. Genomics">
        <title>Molecular analysis of two cytochrome P450 monooxygenase genes required for paxilline biosynthesis in Penicillium paxilli, and effects of paxilline intermediates on mammalian maxi-K ion channels.</title>
        <authorList>
            <person name="McMillan L.K."/>
            <person name="Carr R.L."/>
            <person name="Young C.A."/>
            <person name="Astin J.W."/>
            <person name="Lowe R.G."/>
            <person name="Parker E.J."/>
            <person name="Jameson G.B."/>
            <person name="Finch S.C."/>
            <person name="Miles C.O."/>
            <person name="McManus O.B."/>
            <person name="Schmalhofer W.A."/>
            <person name="Garcia M.L."/>
            <person name="Kaczorowski G.J."/>
            <person name="Goetz M."/>
            <person name="Tkacz J.S."/>
            <person name="Scott B."/>
        </authorList>
    </citation>
    <scope>FUNCTION</scope>
    <scope>DISRUPTION PHENOTYPE</scope>
</reference>
<reference key="4">
    <citation type="journal article" date="2007" name="J. Biol. Chem.">
        <title>Defining paxilline biosynthesis in Penicillium paxilli: functional characterization of two cytochrome P450 monooxygenases.</title>
        <authorList>
            <person name="Saikia S."/>
            <person name="Parker E.J."/>
            <person name="Koulman A."/>
            <person name="Scott B."/>
        </authorList>
    </citation>
    <scope>FUNCTION</scope>
    <scope>CATALYTIC ACTIVITY</scope>
</reference>
<sequence length="515" mass="58780">MDLSDFHISTPLRYFHEEASLLWKLGVFAVLVYFLLPKPTYKTNVKVPTVKYMGPWMPEILSRIFFNSHAPTVIYKGYEKFKTSAFKVVKPDGDLVVLSTRYAEELRQMPSTTLNALEATFTDHVGGYTTILTDSHLHTETIQKKLTPAIGRLIPRMISELDHAFEVEFPTCDDQFASINPYTVFLRLVARVGARIFIGDELCREEKWLQASIDYTKNIFLTIALMRPMPGFLHPIVGRILPSSRSLKDQLSYIQQDLLGPVIKERRRLEASSDSEYKKPDDFLQWMMDLAQNENESHPDNLSHRLLGITSMAVVHTSAMSMTHILYDLLTMPDLIEPLRDEIRNEIKDWNKATQADLSRLIIMDSFLKESQRLNPPGDLSFHRVVKKDLTLSDGLFLPKGTHICMAAGPISKDPDVVSDPDTFDAFRFVKQRTATSGFVSTGPNNMHFGLGRYACPGRFFAAFVIKLILSRFLMDYDFKFETEHKERPKNLLIGDKIVPNVATPILIKRRATKA</sequence>
<accession>Q9C449</accession>
<gene>
    <name evidence="7" type="primary">paxP</name>
</gene>
<comment type="function">
    <text evidence="3 4 5 6">Cytochrome P450 monooxygenase; part of the ATM2 gene cluster that mediates the biosynthesis of paxilline, a mycotoxin that acts as an inhibitor of mammalian maxi-K channels (PubMed:11169115, PubMed:23949005). PaxG, the geranylgeranyl diphosphate (GGPP) synthase is proposed to catalyze the first step in paxilline biosynthesis (PubMed:23949005). Condensation of indole-3-glycerol phosphate with GGPP by paxC then forms 3-geranylgeranylindole (3-GGI), followed by epoxidation and cyclization of this intermediate (by paxM and paxB) to form paspaline (PubMed:23949005). Paspaline is subsequently converted to 13-desoxypaxilline by paxP, the latter being then converted to paxilline by paxQ (PubMed:17428785, PubMed:23949005). Finally paxilline can be mono- and di-prenylated by paxD (PubMed:23949005). PaxP can also utilized beta-paxitriol and alpha-PC-M6 as substrates converting them to paxilline (PubMed:17428785).</text>
</comment>
<comment type="cofactor">
    <cofactor evidence="1">
        <name>heme</name>
        <dbReference type="ChEBI" id="CHEBI:30413"/>
    </cofactor>
</comment>
<comment type="pathway">
    <text evidence="5 10 12">Secondary metabolite biosynthesis.</text>
</comment>
<comment type="subcellular location">
    <subcellularLocation>
        <location evidence="2">Membrane</location>
        <topology evidence="2">Single-pass membrane protein</topology>
    </subcellularLocation>
</comment>
<comment type="disruption phenotype">
    <text evidence="4 6">Impairs the production of paxillines (PubMed:23949005). Leads to the accumulation of the paspaline intermediate (PubMed:12884010).</text>
</comment>
<comment type="similarity">
    <text evidence="9">Belongs to the cytochrome P450 family.</text>
</comment>